<comment type="function">
    <text evidence="1">Structural component of the 12 appendages that hang from the lower collar. Adhesion protein that binds to the host cell surface during virus attachment and mediates teichoic acids degradation.</text>
</comment>
<comment type="cofactor">
    <cofactor evidence="1">
        <name>Mg(2+)</name>
        <dbReference type="ChEBI" id="CHEBI:18420"/>
    </cofactor>
    <text evidence="1">Binds 1 zinc ion per subunit.</text>
</comment>
<comment type="subunit">
    <text evidence="1">Homotrimer. Each appendage is a homotrimer of gp12*.</text>
</comment>
<comment type="subcellular location">
    <subcellularLocation>
        <location evidence="1">Virion</location>
    </subcellularLocation>
    <text evidence="1">Present in 36 copies in the virion.</text>
</comment>
<comment type="domain">
    <text evidence="1">The N-terminus has three domains that function to attach the appendages to the phage, digest the cell wall teichoic acids, and bind irreversibly to the host. The C-terminus is an autochaperone that aids trimerization.</text>
</comment>
<comment type="PTM">
    <text evidence="1">Autocleaved to produce the 74 kDa gp12* assembly attached to the phage particles. Autocleavage of the C-terminus is a posttrimerization event that is followed by an ATP-dependent release.</text>
</comment>
<accession>Q37893</accession>
<keyword id="KW-0067">ATP-binding</keyword>
<keyword id="KW-1235">Degradation of host cell envelope components during virus entry</keyword>
<keyword id="KW-0945">Host-virus interaction</keyword>
<keyword id="KW-0426">Late protein</keyword>
<keyword id="KW-0460">Magnesium</keyword>
<keyword id="KW-0479">Metal-binding</keyword>
<keyword id="KW-0547">Nucleotide-binding</keyword>
<keyword id="KW-0677">Repeat</keyword>
<keyword id="KW-1233">Viral attachment to host adhesion receptor</keyword>
<keyword id="KW-1161">Viral attachment to host cell</keyword>
<keyword id="KW-1230">Viral tail fiber protein</keyword>
<keyword id="KW-1227">Viral tail protein</keyword>
<keyword id="KW-0946">Virion</keyword>
<keyword id="KW-1160">Virus entry into host cell</keyword>
<proteinExistence type="inferred from homology"/>
<evidence type="ECO:0000250" key="1">
    <source>
        <dbReference type="UniProtKB" id="P20345"/>
    </source>
</evidence>
<gene>
    <name type="primary">12</name>
</gene>
<name>FIB12_BPB03</name>
<organismHost>
    <name type="scientific">Bacillus subtilis</name>
    <dbReference type="NCBI Taxonomy" id="1423"/>
</organismHost>
<feature type="chain" id="PRO_0000106591" description="Pre-neck appendage protein">
    <location>
        <begin position="1"/>
        <end position="860"/>
    </location>
</feature>
<feature type="active site" description="Nucleophile" evidence="1">
    <location>
        <position position="701"/>
    </location>
</feature>
<feature type="binding site" evidence="1">
    <location>
        <position position="309"/>
    </location>
    <ligand>
        <name>Mg(2+)</name>
        <dbReference type="ChEBI" id="CHEBI:18420"/>
    </ligand>
</feature>
<feature type="binding site" evidence="1">
    <location>
        <position position="311"/>
    </location>
    <ligand>
        <name>Mg(2+)</name>
        <dbReference type="ChEBI" id="CHEBI:18420"/>
    </ligand>
</feature>
<feature type="binding site" evidence="1">
    <location>
        <begin position="752"/>
        <end position="801"/>
    </location>
    <ligand>
        <name>ATP</name>
        <dbReference type="ChEBI" id="CHEBI:30616"/>
    </ligand>
</feature>
<feature type="site" description="Cleavage" evidence="1">
    <location>
        <begin position="697"/>
        <end position="698"/>
    </location>
</feature>
<reference key="1">
    <citation type="journal article" date="1997" name="Gene">
        <title>Bacteriophage B103: complete DNA sequence of its genome and relationship to other Bacillus phages.</title>
        <authorList>
            <person name="Pecenkova T."/>
            <person name="Benes V."/>
            <person name="Paces J."/>
            <person name="Vlcek C."/>
            <person name="Paces V."/>
        </authorList>
    </citation>
    <scope>NUCLEOTIDE SEQUENCE [LARGE SCALE GENOMIC DNA]</scope>
</reference>
<sequence>MQKPELRRFEKLGEMMVQVYERYLPTAFDESMTLLEKMNKIIEYLNQIGRLTNDVVEEWNKVMEWILNDGLEDYVKETLEKWYEEGKFADLVIQVIDELKQFGVSVKTYGAVGDGKTDDIEAFEKAIASGYPVYIPNGKFAVSRSIKIPSNTVITGAGIDNAVVTFLDSVPLGDSLMINDNYATGNENIYLSDFTLDGNCQRFGVNAIGSGGSRDSNLSIHASKNVHINRIKSINATLHGIDITCGGLDYPYMGDGTTAPYPSRDIYISDCEAPSLGDDGITTNNSEYITISNCNCHDPRLLNNCNGIEIDDGSRHVQLSNNISKNCFGGVEVKAHGNVPAAYNVSINGHMSIGDVRSYNFRHIGHHSATDPESMSAKNIICNNLMSVNPNNKRGFQNNAAPRVLAVSAYYGVVVNGLSAYTTEPANLTETAISVQFRARNVSLSGIVMTGFSMAENAIYVIGGSRGGDSVNISNVTLNNSGRNGVAIGSGIDNVSISNVSAIGDGIANPIAIVKTVNSNPQISGVNGIGYPTVCQVAGVAYNDGLTLFNGAFRGATSSSEFIHSEGFVLGSTSKSGATASKSGVVSSSNSIAKAERSLIAGSASCTTSGSYNTILSSLNCETTDTGNLISTSSASKATGNRNIILASYGVLASGSYKVNGGYGGEGTPSASNIKLGNSLNGHIKAKNTVTGANTWSDYGEYFESVDGQAIETGYLVTLEGSKIRKAQEGEKIIGAISETAGIILGESTWNWQGQYLKNEFGGLIYETVEIDEGVFEKMPKINPSYNPKLEYLSRGERPEWNIVGLIGQIMVRIDDTVKIGSGISAKDGIATDGDTGIVMQITTPYESSKGYGVAKVLLK</sequence>
<organism>
    <name type="scientific">Bacillus phage B103</name>
    <name type="common">Bacteriophage B103</name>
    <dbReference type="NCBI Taxonomy" id="2994042"/>
    <lineage>
        <taxon>Viruses</taxon>
        <taxon>Duplodnaviria</taxon>
        <taxon>Heunggongvirae</taxon>
        <taxon>Uroviricota</taxon>
        <taxon>Caudoviricetes</taxon>
        <taxon>Salasmaviridae</taxon>
        <taxon>Picovirinae</taxon>
        <taxon>Beecentumtrevirus</taxon>
        <taxon>Beecentumtrevirus B103</taxon>
    </lineage>
</organism>
<protein>
    <recommendedName>
        <fullName>Pre-neck appendage protein</fullName>
    </recommendedName>
    <alternativeName>
        <fullName>Gene product 12</fullName>
        <shortName>gp12</shortName>
    </alternativeName>
    <alternativeName>
        <fullName>Late protein GP12</fullName>
    </alternativeName>
    <alternativeName>
        <fullName>NP1</fullName>
    </alternativeName>
    <alternativeName>
        <fullName>Protein p12</fullName>
    </alternativeName>
</protein>
<dbReference type="EMBL" id="X99260">
    <property type="protein sequence ID" value="CAA67660.1"/>
    <property type="molecule type" value="Genomic_DNA"/>
</dbReference>
<dbReference type="RefSeq" id="NP_690646.1">
    <property type="nucleotide sequence ID" value="NC_004165.1"/>
</dbReference>
<dbReference type="SMR" id="Q37893"/>
<dbReference type="MEROPS" id="G02.001"/>
<dbReference type="KEGG" id="vg:955361"/>
<dbReference type="Proteomes" id="UP000000971">
    <property type="component" value="Segment"/>
</dbReference>
<dbReference type="GO" id="GO:0098024">
    <property type="term" value="C:virus tail, fiber"/>
    <property type="evidence" value="ECO:0007669"/>
    <property type="project" value="UniProtKB-KW"/>
</dbReference>
<dbReference type="GO" id="GO:0005524">
    <property type="term" value="F:ATP binding"/>
    <property type="evidence" value="ECO:0007669"/>
    <property type="project" value="UniProtKB-KW"/>
</dbReference>
<dbReference type="GO" id="GO:0046872">
    <property type="term" value="F:metal ion binding"/>
    <property type="evidence" value="ECO:0007669"/>
    <property type="project" value="UniProtKB-KW"/>
</dbReference>
<dbReference type="GO" id="GO:0098671">
    <property type="term" value="P:adhesion receptor-mediated virion attachment to host cell"/>
    <property type="evidence" value="ECO:0007669"/>
    <property type="project" value="UniProtKB-KW"/>
</dbReference>
<dbReference type="GO" id="GO:0098994">
    <property type="term" value="P:symbiont entry into host cell via disruption of host cell envelope"/>
    <property type="evidence" value="ECO:0007669"/>
    <property type="project" value="UniProtKB-KW"/>
</dbReference>
<dbReference type="Gene3D" id="2.40.300.10">
    <property type="entry name" value="Head decoration protein D"/>
    <property type="match status" value="1"/>
</dbReference>
<dbReference type="Gene3D" id="2.160.10.20">
    <property type="entry name" value="Insect antifreeze protein"/>
    <property type="match status" value="1"/>
</dbReference>
<dbReference type="Gene3D" id="2.160.20.10">
    <property type="entry name" value="Single-stranded right-handed beta-helix, Pectin lyase-like"/>
    <property type="match status" value="1"/>
</dbReference>
<dbReference type="Gene3D" id="4.10.80.40">
    <property type="entry name" value="succinate dehydrogenase protein domain"/>
    <property type="match status" value="1"/>
</dbReference>
<dbReference type="InterPro" id="IPR006626">
    <property type="entry name" value="PbH1"/>
</dbReference>
<dbReference type="InterPro" id="IPR012334">
    <property type="entry name" value="Pectin_lyas_fold"/>
</dbReference>
<dbReference type="InterPro" id="IPR011050">
    <property type="entry name" value="Pectin_lyase_fold/virulence"/>
</dbReference>
<dbReference type="InterPro" id="IPR021865">
    <property type="entry name" value="Peptidase_G2"/>
</dbReference>
<dbReference type="InterPro" id="IPR024535">
    <property type="entry name" value="RHGA/B-epi-like_pectate_lyase"/>
</dbReference>
<dbReference type="Pfam" id="PF12708">
    <property type="entry name" value="Pect-lyase_RHGA_epim"/>
    <property type="match status" value="1"/>
</dbReference>
<dbReference type="Pfam" id="PF11962">
    <property type="entry name" value="Peptidase_G2"/>
    <property type="match status" value="1"/>
</dbReference>
<dbReference type="SMART" id="SM00710">
    <property type="entry name" value="PbH1"/>
    <property type="match status" value="8"/>
</dbReference>
<dbReference type="SUPFAM" id="SSF51126">
    <property type="entry name" value="Pectin lyase-like"/>
    <property type="match status" value="1"/>
</dbReference>